<reference key="1">
    <citation type="journal article" date="2019" name="Org. Biomol. Chem.">
        <title>Biosynthesis of an anti-tuberculosis sesterterpenoid asperterpenoid A.</title>
        <authorList>
            <person name="Huang J.H."/>
            <person name="Lv J.M."/>
            <person name="Wang Q.Z."/>
            <person name="Zou J."/>
            <person name="Lu Y.J."/>
            <person name="Wang Q.L."/>
            <person name="Chen D.N."/>
            <person name="Yao X.S."/>
            <person name="Gao H."/>
            <person name="Hu D."/>
        </authorList>
    </citation>
    <scope>NUCLEOTIDE SEQUENCE [GENOMIC DNA]</scope>
    <scope>FUNCTION</scope>
    <scope>CATALYTIC ACTIVITY</scope>
    <scope>PATHWAY</scope>
    <scope>BIOTECHNOLOGY</scope>
    <source>
        <strain>ATCC 26942 / CBS 387.67 / CCM F-175 / VKM F-2091</strain>
    </source>
</reference>
<keyword id="KW-0325">Glycoprotein</keyword>
<keyword id="KW-0349">Heme</keyword>
<keyword id="KW-0408">Iron</keyword>
<keyword id="KW-0472">Membrane</keyword>
<keyword id="KW-0479">Metal-binding</keyword>
<keyword id="KW-0503">Monooxygenase</keyword>
<keyword id="KW-0560">Oxidoreductase</keyword>
<keyword id="KW-0812">Transmembrane</keyword>
<keyword id="KW-1133">Transmembrane helix</keyword>
<name>ASTA_TALWO</name>
<accession>A0A3Q9FEJ4</accession>
<organism>
    <name type="scientific">Talaromyces wortmannii</name>
    <name type="common">Penicillium wortmannii</name>
    <dbReference type="NCBI Taxonomy" id="28567"/>
    <lineage>
        <taxon>Eukaryota</taxon>
        <taxon>Fungi</taxon>
        <taxon>Dikarya</taxon>
        <taxon>Ascomycota</taxon>
        <taxon>Pezizomycotina</taxon>
        <taxon>Eurotiomycetes</taxon>
        <taxon>Eurotiomycetidae</taxon>
        <taxon>Eurotiales</taxon>
        <taxon>Trichocomaceae</taxon>
        <taxon>Talaromyces</taxon>
        <taxon>Talaromyces sect. Islandici</taxon>
    </lineage>
</organism>
<feature type="chain" id="PRO_0000452654" description="Cytochrome P450 monooxygenase astA">
    <location>
        <begin position="1"/>
        <end position="493"/>
    </location>
</feature>
<feature type="transmembrane region" description="Helical" evidence="2">
    <location>
        <begin position="5"/>
        <end position="25"/>
    </location>
</feature>
<feature type="binding site" description="axial binding residue" evidence="1">
    <location>
        <position position="433"/>
    </location>
    <ligand>
        <name>heme</name>
        <dbReference type="ChEBI" id="CHEBI:30413"/>
    </ligand>
    <ligandPart>
        <name>Fe</name>
        <dbReference type="ChEBI" id="CHEBI:18248"/>
    </ligandPart>
</feature>
<feature type="glycosylation site" description="N-linked (GlcNAc...) asparagine" evidence="3">
    <location>
        <position position="174"/>
    </location>
</feature>
<feature type="glycosylation site" description="N-linked (GlcNAc...) asparagine" evidence="3">
    <location>
        <position position="286"/>
    </location>
</feature>
<proteinExistence type="evidence at protein level"/>
<gene>
    <name evidence="5" type="primary">astA</name>
    <name evidence="5" type="synonym">aspA</name>
</gene>
<evidence type="ECO:0000250" key="1">
    <source>
        <dbReference type="UniProtKB" id="P04798"/>
    </source>
</evidence>
<evidence type="ECO:0000255" key="2"/>
<evidence type="ECO:0000255" key="3">
    <source>
        <dbReference type="PROSITE-ProRule" id="PRU00498"/>
    </source>
</evidence>
<evidence type="ECO:0000269" key="4">
    <source>
    </source>
</evidence>
<evidence type="ECO:0000303" key="5">
    <source>
    </source>
</evidence>
<evidence type="ECO:0000305" key="6"/>
<sequence length="493" mass="56874">MEQREIILLGLAALAVTYQVIVWIYNAWFHPLSGYPGPKLFGASYLPGLYHRIRGDYVLVHTALHERFGEVIRVSPNELSYINPQAWKDITGQGSGRQDMEKDPLSFGRPMPNAPSIFNAHRMDHSRIRRTMSHAFSASALRRQESLIQSHVKMMIQCLREHNEEVVDMVSWYNFTTFDMFGDLAFGESFGCLTNSLYHPWVKMLIMSMKAGYFIIQAQKYPIFEKVLMSFIPRMMRQRRRDHLALTQAKLAKRMAKPEERPDFLSFILRHQDEATGMSLPELEINASTLIVAGSETTATLLSGCTYYLLRNPRVMEKLLNEVRTTFKSEDEIDITTVNGLKYMLAVLDEALRVYPPAPGNFHRLVPKEGSVICEKFVPGETQVSVCHYAAYHSPCNFHQPDEFIPERFLGESKFENDRRDVLQPFGTGSRACLGRNLAYFEMRLILTHVLWNFDLELMPQSKYWANQKVFAIWDKPELYVKLKPRAGLEVRA</sequence>
<comment type="function">
    <text evidence="4">Cytochrome P450 monooxygenase; part of the gene cluster that mediates the biosynthesis of the asperterpenoids, sesterterpenes that exhibit anti-tuberculosis activity (PubMed:30548032). The first step of the pathway is performed by the sesterterpene synthase astC that possesses both prenyl transferase and terpene cyclase activity, converting isopentenyl diphosphate and dimethylallyl diphosphate into geranylfarnesyl diphosphate (GFPP) and further converting GFPP into preasperterpenoid A, respectively (PubMed:30548032). The cytochrome P450 monooxygenase astB then dually oxidizes preasperterpenoid A to produce asperterpenoid A along with a minor product, asperterpenoid B (PubMed:30548032). Finally, the cytochrome P450 monooxygenase astA converts asperterpenoid A into asperterpenoid C (PubMed:30548032).</text>
</comment>
<comment type="catalytic activity">
    <reaction evidence="4">
        <text>asperterpenoid A + reduced [NADPH--hemoprotein reductase] + O2 = asperterpenoid C + oxidized [NADPH--hemoprotein reductase] + H2O + H(+)</text>
        <dbReference type="Rhea" id="RHEA:66844"/>
        <dbReference type="Rhea" id="RHEA-COMP:11964"/>
        <dbReference type="Rhea" id="RHEA-COMP:11965"/>
        <dbReference type="ChEBI" id="CHEBI:15377"/>
        <dbReference type="ChEBI" id="CHEBI:15378"/>
        <dbReference type="ChEBI" id="CHEBI:15379"/>
        <dbReference type="ChEBI" id="CHEBI:57618"/>
        <dbReference type="ChEBI" id="CHEBI:58210"/>
        <dbReference type="ChEBI" id="CHEBI:167512"/>
        <dbReference type="ChEBI" id="CHEBI:167514"/>
    </reaction>
    <physiologicalReaction direction="left-to-right" evidence="4">
        <dbReference type="Rhea" id="RHEA:66845"/>
    </physiologicalReaction>
</comment>
<comment type="cofactor">
    <cofactor evidence="1">
        <name>heme</name>
        <dbReference type="ChEBI" id="CHEBI:30413"/>
    </cofactor>
</comment>
<comment type="pathway">
    <text evidence="4">Secondary metabolite biosynthesis; terpenoid biosynthesis.</text>
</comment>
<comment type="subcellular location">
    <subcellularLocation>
        <location evidence="2">Membrane</location>
        <topology evidence="2">Single-pass membrane protein</topology>
    </subcellularLocation>
</comment>
<comment type="biotechnology">
    <text evidence="4">Asperterpenoids A and B, but not the final product asperterpenoid C, exhibit potent inhibitory activity against Mycobacterium tuberculosis protein tyrosine phosphatase B with IC(50) values of 3 to 6 uM.</text>
</comment>
<comment type="similarity">
    <text evidence="6">Belongs to the cytochrome P450 family.</text>
</comment>
<dbReference type="EC" id="1.-.-.-" evidence="4"/>
<dbReference type="EMBL" id="MK140602">
    <property type="protein sequence ID" value="AZQ56742.1"/>
    <property type="molecule type" value="Genomic_DNA"/>
</dbReference>
<dbReference type="SMR" id="A0A3Q9FEJ4"/>
<dbReference type="GlyCosmos" id="A0A3Q9FEJ4">
    <property type="glycosylation" value="2 sites, No reported glycans"/>
</dbReference>
<dbReference type="UniPathway" id="UPA00213"/>
<dbReference type="GO" id="GO:0016020">
    <property type="term" value="C:membrane"/>
    <property type="evidence" value="ECO:0007669"/>
    <property type="project" value="UniProtKB-SubCell"/>
</dbReference>
<dbReference type="GO" id="GO:0020037">
    <property type="term" value="F:heme binding"/>
    <property type="evidence" value="ECO:0007669"/>
    <property type="project" value="InterPro"/>
</dbReference>
<dbReference type="GO" id="GO:0005506">
    <property type="term" value="F:iron ion binding"/>
    <property type="evidence" value="ECO:0007669"/>
    <property type="project" value="InterPro"/>
</dbReference>
<dbReference type="GO" id="GO:0004497">
    <property type="term" value="F:monooxygenase activity"/>
    <property type="evidence" value="ECO:0007669"/>
    <property type="project" value="UniProtKB-KW"/>
</dbReference>
<dbReference type="GO" id="GO:0016705">
    <property type="term" value="F:oxidoreductase activity, acting on paired donors, with incorporation or reduction of molecular oxygen"/>
    <property type="evidence" value="ECO:0007669"/>
    <property type="project" value="InterPro"/>
</dbReference>
<dbReference type="GO" id="GO:0016114">
    <property type="term" value="P:terpenoid biosynthetic process"/>
    <property type="evidence" value="ECO:0007669"/>
    <property type="project" value="UniProtKB-UniPathway"/>
</dbReference>
<dbReference type="CDD" id="cd11058">
    <property type="entry name" value="CYP60B-like"/>
    <property type="match status" value="1"/>
</dbReference>
<dbReference type="FunFam" id="1.10.630.10:FF:000047">
    <property type="entry name" value="Cytochrome P450 monooxygenase"/>
    <property type="match status" value="1"/>
</dbReference>
<dbReference type="Gene3D" id="1.10.630.10">
    <property type="entry name" value="Cytochrome P450"/>
    <property type="match status" value="1"/>
</dbReference>
<dbReference type="InterPro" id="IPR001128">
    <property type="entry name" value="Cyt_P450"/>
</dbReference>
<dbReference type="InterPro" id="IPR017972">
    <property type="entry name" value="Cyt_P450_CS"/>
</dbReference>
<dbReference type="InterPro" id="IPR002401">
    <property type="entry name" value="Cyt_P450_E_grp-I"/>
</dbReference>
<dbReference type="InterPro" id="IPR036396">
    <property type="entry name" value="Cyt_P450_sf"/>
</dbReference>
<dbReference type="InterPro" id="IPR050121">
    <property type="entry name" value="Cytochrome_P450_monoxygenase"/>
</dbReference>
<dbReference type="PANTHER" id="PTHR24305">
    <property type="entry name" value="CYTOCHROME P450"/>
    <property type="match status" value="1"/>
</dbReference>
<dbReference type="PANTHER" id="PTHR24305:SF210">
    <property type="entry name" value="CYTOCHROME P450 MONOOXYGENASE ASQL-RELATED"/>
    <property type="match status" value="1"/>
</dbReference>
<dbReference type="Pfam" id="PF00067">
    <property type="entry name" value="p450"/>
    <property type="match status" value="1"/>
</dbReference>
<dbReference type="PRINTS" id="PR00463">
    <property type="entry name" value="EP450I"/>
</dbReference>
<dbReference type="PRINTS" id="PR00385">
    <property type="entry name" value="P450"/>
</dbReference>
<dbReference type="SUPFAM" id="SSF48264">
    <property type="entry name" value="Cytochrome P450"/>
    <property type="match status" value="1"/>
</dbReference>
<dbReference type="PROSITE" id="PS00086">
    <property type="entry name" value="CYTOCHROME_P450"/>
    <property type="match status" value="1"/>
</dbReference>
<protein>
    <recommendedName>
        <fullName evidence="5">Cytochrome P450 monooxygenase astA</fullName>
        <ecNumber evidence="4">1.-.-.-</ecNumber>
    </recommendedName>
    <alternativeName>
        <fullName evidence="5">Asperterpenoid biosynthesis cluster protein A</fullName>
    </alternativeName>
</protein>